<feature type="chain" id="PRO_0000384734" description="Ribosome maturation factor RimP">
    <location>
        <begin position="1"/>
        <end position="156"/>
    </location>
</feature>
<dbReference type="EMBL" id="CP000553">
    <property type="protein sequence ID" value="ABM76448.1"/>
    <property type="status" value="ALT_INIT"/>
    <property type="molecule type" value="Genomic_DNA"/>
</dbReference>
<dbReference type="RefSeq" id="WP_011824425.1">
    <property type="nucleotide sequence ID" value="NC_008819.1"/>
</dbReference>
<dbReference type="SMR" id="A2C4N8"/>
<dbReference type="KEGG" id="pme:NATL1_18921"/>
<dbReference type="eggNOG" id="COG0779">
    <property type="taxonomic scope" value="Bacteria"/>
</dbReference>
<dbReference type="HOGENOM" id="CLU_070525_2_1_3"/>
<dbReference type="Proteomes" id="UP000002592">
    <property type="component" value="Chromosome"/>
</dbReference>
<dbReference type="GO" id="GO:0005829">
    <property type="term" value="C:cytosol"/>
    <property type="evidence" value="ECO:0007669"/>
    <property type="project" value="TreeGrafter"/>
</dbReference>
<dbReference type="GO" id="GO:0000028">
    <property type="term" value="P:ribosomal small subunit assembly"/>
    <property type="evidence" value="ECO:0007669"/>
    <property type="project" value="TreeGrafter"/>
</dbReference>
<dbReference type="GO" id="GO:0006412">
    <property type="term" value="P:translation"/>
    <property type="evidence" value="ECO:0007669"/>
    <property type="project" value="TreeGrafter"/>
</dbReference>
<dbReference type="Gene3D" id="3.30.300.70">
    <property type="entry name" value="RimP-like superfamily, N-terminal"/>
    <property type="match status" value="1"/>
</dbReference>
<dbReference type="HAMAP" id="MF_01077">
    <property type="entry name" value="RimP"/>
    <property type="match status" value="1"/>
</dbReference>
<dbReference type="InterPro" id="IPR003728">
    <property type="entry name" value="Ribosome_maturation_RimP"/>
</dbReference>
<dbReference type="InterPro" id="IPR036847">
    <property type="entry name" value="RimP_C_sf"/>
</dbReference>
<dbReference type="InterPro" id="IPR028989">
    <property type="entry name" value="RimP_N"/>
</dbReference>
<dbReference type="InterPro" id="IPR035956">
    <property type="entry name" value="RimP_N_sf"/>
</dbReference>
<dbReference type="PANTHER" id="PTHR33867">
    <property type="entry name" value="RIBOSOME MATURATION FACTOR RIMP"/>
    <property type="match status" value="1"/>
</dbReference>
<dbReference type="PANTHER" id="PTHR33867:SF1">
    <property type="entry name" value="RIBOSOME MATURATION FACTOR RIMP"/>
    <property type="match status" value="1"/>
</dbReference>
<dbReference type="Pfam" id="PF02576">
    <property type="entry name" value="RimP_N"/>
    <property type="match status" value="1"/>
</dbReference>
<dbReference type="SUPFAM" id="SSF74942">
    <property type="entry name" value="YhbC-like, C-terminal domain"/>
    <property type="match status" value="1"/>
</dbReference>
<dbReference type="SUPFAM" id="SSF75420">
    <property type="entry name" value="YhbC-like, N-terminal domain"/>
    <property type="match status" value="1"/>
</dbReference>
<gene>
    <name evidence="1" type="primary">rimP</name>
    <name type="ordered locus">NATL1_18921</name>
</gene>
<accession>A2C4N8</accession>
<sequence length="156" mass="17669">MSNQTVSELKDLTAKSATNYGFDVTDFKMFTHLNPLSIQVNIRHKNPDKKVTIDDCSILSQYIDEAIQGSSILDQPFNLEISSEGISDFLTEEKDFQTFKGFPVEVSYQDLKKIEQQTNGLLLKRTDNELQINQKGKTQRIPVEDVIQVRLTTPAG</sequence>
<proteinExistence type="inferred from homology"/>
<organism>
    <name type="scientific">Prochlorococcus marinus (strain NATL1A)</name>
    <dbReference type="NCBI Taxonomy" id="167555"/>
    <lineage>
        <taxon>Bacteria</taxon>
        <taxon>Bacillati</taxon>
        <taxon>Cyanobacteriota</taxon>
        <taxon>Cyanophyceae</taxon>
        <taxon>Synechococcales</taxon>
        <taxon>Prochlorococcaceae</taxon>
        <taxon>Prochlorococcus</taxon>
    </lineage>
</organism>
<comment type="function">
    <text evidence="1">Required for maturation of 30S ribosomal subunits.</text>
</comment>
<comment type="subcellular location">
    <subcellularLocation>
        <location evidence="1">Cytoplasm</location>
    </subcellularLocation>
</comment>
<comment type="similarity">
    <text evidence="1">Belongs to the RimP family.</text>
</comment>
<comment type="sequence caution" evidence="2">
    <conflict type="erroneous initiation">
        <sequence resource="EMBL-CDS" id="ABM76448"/>
    </conflict>
</comment>
<name>RIMP_PROM1</name>
<evidence type="ECO:0000255" key="1">
    <source>
        <dbReference type="HAMAP-Rule" id="MF_01077"/>
    </source>
</evidence>
<evidence type="ECO:0000305" key="2"/>
<reference key="1">
    <citation type="journal article" date="2007" name="PLoS Genet.">
        <title>Patterns and implications of gene gain and loss in the evolution of Prochlorococcus.</title>
        <authorList>
            <person name="Kettler G.C."/>
            <person name="Martiny A.C."/>
            <person name="Huang K."/>
            <person name="Zucker J."/>
            <person name="Coleman M.L."/>
            <person name="Rodrigue S."/>
            <person name="Chen F."/>
            <person name="Lapidus A."/>
            <person name="Ferriera S."/>
            <person name="Johnson J."/>
            <person name="Steglich C."/>
            <person name="Church G.M."/>
            <person name="Richardson P."/>
            <person name="Chisholm S.W."/>
        </authorList>
    </citation>
    <scope>NUCLEOTIDE SEQUENCE [LARGE SCALE GENOMIC DNA]</scope>
    <source>
        <strain>NATL1A</strain>
    </source>
</reference>
<protein>
    <recommendedName>
        <fullName evidence="1">Ribosome maturation factor RimP</fullName>
    </recommendedName>
</protein>
<keyword id="KW-0963">Cytoplasm</keyword>
<keyword id="KW-0690">Ribosome biogenesis</keyword>